<organism>
    <name type="scientific">Serratia proteamaculans (strain 568)</name>
    <dbReference type="NCBI Taxonomy" id="399741"/>
    <lineage>
        <taxon>Bacteria</taxon>
        <taxon>Pseudomonadati</taxon>
        <taxon>Pseudomonadota</taxon>
        <taxon>Gammaproteobacteria</taxon>
        <taxon>Enterobacterales</taxon>
        <taxon>Yersiniaceae</taxon>
        <taxon>Serratia</taxon>
    </lineage>
</organism>
<accession>A8GCH7</accession>
<reference key="1">
    <citation type="submission" date="2007-09" db="EMBL/GenBank/DDBJ databases">
        <title>Complete sequence of chromosome of Serratia proteamaculans 568.</title>
        <authorList>
            <consortium name="US DOE Joint Genome Institute"/>
            <person name="Copeland A."/>
            <person name="Lucas S."/>
            <person name="Lapidus A."/>
            <person name="Barry K."/>
            <person name="Glavina del Rio T."/>
            <person name="Dalin E."/>
            <person name="Tice H."/>
            <person name="Pitluck S."/>
            <person name="Chain P."/>
            <person name="Malfatti S."/>
            <person name="Shin M."/>
            <person name="Vergez L."/>
            <person name="Schmutz J."/>
            <person name="Larimer F."/>
            <person name="Land M."/>
            <person name="Hauser L."/>
            <person name="Kyrpides N."/>
            <person name="Kim E."/>
            <person name="Taghavi S."/>
            <person name="Newman L."/>
            <person name="Vangronsveld J."/>
            <person name="van der Lelie D."/>
            <person name="Richardson P."/>
        </authorList>
    </citation>
    <scope>NUCLEOTIDE SEQUENCE [LARGE SCALE GENOMIC DNA]</scope>
    <source>
        <strain>568</strain>
    </source>
</reference>
<name>LPXK_SERP5</name>
<gene>
    <name evidence="1" type="primary">lpxK</name>
    <name type="ordered locus">Spro_1713</name>
</gene>
<protein>
    <recommendedName>
        <fullName evidence="1">Tetraacyldisaccharide 4'-kinase</fullName>
        <ecNumber evidence="1">2.7.1.130</ecNumber>
    </recommendedName>
    <alternativeName>
        <fullName evidence="1">Lipid A 4'-kinase</fullName>
    </alternativeName>
</protein>
<dbReference type="EC" id="2.7.1.130" evidence="1"/>
<dbReference type="EMBL" id="CP000826">
    <property type="protein sequence ID" value="ABV40817.1"/>
    <property type="molecule type" value="Genomic_DNA"/>
</dbReference>
<dbReference type="SMR" id="A8GCH7"/>
<dbReference type="STRING" id="399741.Spro_1713"/>
<dbReference type="KEGG" id="spe:Spro_1713"/>
<dbReference type="eggNOG" id="COG1663">
    <property type="taxonomic scope" value="Bacteria"/>
</dbReference>
<dbReference type="HOGENOM" id="CLU_038816_2_0_6"/>
<dbReference type="OrthoDB" id="9766423at2"/>
<dbReference type="UniPathway" id="UPA00359">
    <property type="reaction ID" value="UER00482"/>
</dbReference>
<dbReference type="GO" id="GO:0005886">
    <property type="term" value="C:plasma membrane"/>
    <property type="evidence" value="ECO:0007669"/>
    <property type="project" value="TreeGrafter"/>
</dbReference>
<dbReference type="GO" id="GO:0005524">
    <property type="term" value="F:ATP binding"/>
    <property type="evidence" value="ECO:0007669"/>
    <property type="project" value="UniProtKB-UniRule"/>
</dbReference>
<dbReference type="GO" id="GO:0009029">
    <property type="term" value="F:tetraacyldisaccharide 4'-kinase activity"/>
    <property type="evidence" value="ECO:0007669"/>
    <property type="project" value="UniProtKB-UniRule"/>
</dbReference>
<dbReference type="GO" id="GO:0009245">
    <property type="term" value="P:lipid A biosynthetic process"/>
    <property type="evidence" value="ECO:0007669"/>
    <property type="project" value="UniProtKB-UniRule"/>
</dbReference>
<dbReference type="GO" id="GO:0009244">
    <property type="term" value="P:lipopolysaccharide core region biosynthetic process"/>
    <property type="evidence" value="ECO:0007669"/>
    <property type="project" value="TreeGrafter"/>
</dbReference>
<dbReference type="HAMAP" id="MF_00409">
    <property type="entry name" value="LpxK"/>
    <property type="match status" value="1"/>
</dbReference>
<dbReference type="InterPro" id="IPR003758">
    <property type="entry name" value="LpxK"/>
</dbReference>
<dbReference type="InterPro" id="IPR027417">
    <property type="entry name" value="P-loop_NTPase"/>
</dbReference>
<dbReference type="NCBIfam" id="TIGR00682">
    <property type="entry name" value="lpxK"/>
    <property type="match status" value="1"/>
</dbReference>
<dbReference type="PANTHER" id="PTHR42724">
    <property type="entry name" value="TETRAACYLDISACCHARIDE 4'-KINASE"/>
    <property type="match status" value="1"/>
</dbReference>
<dbReference type="PANTHER" id="PTHR42724:SF1">
    <property type="entry name" value="TETRAACYLDISACCHARIDE 4'-KINASE, MITOCHONDRIAL-RELATED"/>
    <property type="match status" value="1"/>
</dbReference>
<dbReference type="Pfam" id="PF02606">
    <property type="entry name" value="LpxK"/>
    <property type="match status" value="1"/>
</dbReference>
<dbReference type="SUPFAM" id="SSF52540">
    <property type="entry name" value="P-loop containing nucleoside triphosphate hydrolases"/>
    <property type="match status" value="1"/>
</dbReference>
<comment type="function">
    <text evidence="1">Transfers the gamma-phosphate of ATP to the 4'-position of a tetraacyldisaccharide 1-phosphate intermediate (termed DS-1-P) to form tetraacyldisaccharide 1,4'-bis-phosphate (lipid IVA).</text>
</comment>
<comment type="catalytic activity">
    <reaction evidence="1">
        <text>a lipid A disaccharide + ATP = a lipid IVA + ADP + H(+)</text>
        <dbReference type="Rhea" id="RHEA:67840"/>
        <dbReference type="ChEBI" id="CHEBI:15378"/>
        <dbReference type="ChEBI" id="CHEBI:30616"/>
        <dbReference type="ChEBI" id="CHEBI:176343"/>
        <dbReference type="ChEBI" id="CHEBI:176425"/>
        <dbReference type="ChEBI" id="CHEBI:456216"/>
        <dbReference type="EC" id="2.7.1.130"/>
    </reaction>
</comment>
<comment type="pathway">
    <text evidence="1">Glycolipid biosynthesis; lipid IV(A) biosynthesis; lipid IV(A) from (3R)-3-hydroxytetradecanoyl-[acyl-carrier-protein] and UDP-N-acetyl-alpha-D-glucosamine: step 6/6.</text>
</comment>
<comment type="similarity">
    <text evidence="1">Belongs to the LpxK family.</text>
</comment>
<proteinExistence type="inferred from homology"/>
<evidence type="ECO:0000255" key="1">
    <source>
        <dbReference type="HAMAP-Rule" id="MF_00409"/>
    </source>
</evidence>
<keyword id="KW-0067">ATP-binding</keyword>
<keyword id="KW-0418">Kinase</keyword>
<keyword id="KW-0441">Lipid A biosynthesis</keyword>
<keyword id="KW-0444">Lipid biosynthesis</keyword>
<keyword id="KW-0443">Lipid metabolism</keyword>
<keyword id="KW-0547">Nucleotide-binding</keyword>
<keyword id="KW-0808">Transferase</keyword>
<sequence length="326" mass="35705">MIERIWSGSSLVYLLLLPLSWLYGLVSGLIRLSYRCGLRKSWRAPVPVVVVGNLTAGGNGKTPMVIWLVEQLQQRGYRVGVVSRGYGGKAEAYPLLLNAGTTTQQAGDEPVLIYQRTAAPVAISPKRSEAVQALLKQQPLDVVITDDGLQHYALQRDFELVVIDGVRRFGNGWWLPAGPMRERASRLNSVDALIANGGVAQPGEIAMRLQARDAVNVASGERRPAVELPHVVAMAGIGHPPRFFATLEKLGVAVEKEVAFADHQEYQHGPLAALVSSEQTLLMTEKDAVKCRAFAQPNWWYLPVDAVLPPDQAEQLLHNIEALLTK</sequence>
<feature type="chain" id="PRO_1000123745" description="Tetraacyldisaccharide 4'-kinase">
    <location>
        <begin position="1"/>
        <end position="326"/>
    </location>
</feature>
<feature type="binding site" evidence="1">
    <location>
        <begin position="55"/>
        <end position="62"/>
    </location>
    <ligand>
        <name>ATP</name>
        <dbReference type="ChEBI" id="CHEBI:30616"/>
    </ligand>
</feature>